<accession>B7N7Q5</accession>
<sequence length="273" mass="28757">MHDANIRVAIAGAGGRMGRQLIQAALALEGVQLGAALEREGSSLLGSDAGELAGAGKTGVTVQSSLDAVKDDFDVFIDFTRPEGTLNHLAFCRQHGKGMVIGTTGFDEAGKQAIRDAAADIAIVFAANFSVGVNVMLKLLEKAAKVMGDYTDIEIIEAHHRHKVDAPSGTALAMGEAIAHALDKDLKDCAVYSREGHTGERVPGTIGFATVRAGDIVGEHTAMFADIGERLEITHKASSRMTFANGAVRSALWLSGKESGLFDMRDVLDLNNL</sequence>
<name>DAPB_ECOLU</name>
<feature type="chain" id="PRO_1000117371" description="4-hydroxy-tetrahydrodipicolinate reductase">
    <location>
        <begin position="1"/>
        <end position="273"/>
    </location>
</feature>
<feature type="active site" description="Proton donor/acceptor" evidence="1">
    <location>
        <position position="159"/>
    </location>
</feature>
<feature type="active site" description="Proton donor" evidence="1">
    <location>
        <position position="163"/>
    </location>
</feature>
<feature type="binding site" evidence="1">
    <location>
        <begin position="12"/>
        <end position="17"/>
    </location>
    <ligand>
        <name>NAD(+)</name>
        <dbReference type="ChEBI" id="CHEBI:57540"/>
    </ligand>
</feature>
<feature type="binding site" evidence="1">
    <location>
        <position position="38"/>
    </location>
    <ligand>
        <name>NAD(+)</name>
        <dbReference type="ChEBI" id="CHEBI:57540"/>
    </ligand>
</feature>
<feature type="binding site" evidence="1">
    <location>
        <position position="39"/>
    </location>
    <ligand>
        <name>NADP(+)</name>
        <dbReference type="ChEBI" id="CHEBI:58349"/>
    </ligand>
</feature>
<feature type="binding site" evidence="1">
    <location>
        <begin position="102"/>
        <end position="104"/>
    </location>
    <ligand>
        <name>NAD(+)</name>
        <dbReference type="ChEBI" id="CHEBI:57540"/>
    </ligand>
</feature>
<feature type="binding site" evidence="1">
    <location>
        <begin position="126"/>
        <end position="129"/>
    </location>
    <ligand>
        <name>NAD(+)</name>
        <dbReference type="ChEBI" id="CHEBI:57540"/>
    </ligand>
</feature>
<feature type="binding site" evidence="1">
    <location>
        <position position="160"/>
    </location>
    <ligand>
        <name>(S)-2,3,4,5-tetrahydrodipicolinate</name>
        <dbReference type="ChEBI" id="CHEBI:16845"/>
    </ligand>
</feature>
<feature type="binding site" evidence="1">
    <location>
        <begin position="169"/>
        <end position="170"/>
    </location>
    <ligand>
        <name>(S)-2,3,4,5-tetrahydrodipicolinate</name>
        <dbReference type="ChEBI" id="CHEBI:16845"/>
    </ligand>
</feature>
<dbReference type="EC" id="1.17.1.8" evidence="1"/>
<dbReference type="EMBL" id="CU928163">
    <property type="protein sequence ID" value="CAR11255.1"/>
    <property type="molecule type" value="Genomic_DNA"/>
</dbReference>
<dbReference type="RefSeq" id="WP_000543604.1">
    <property type="nucleotide sequence ID" value="NC_011751.1"/>
</dbReference>
<dbReference type="RefSeq" id="YP_002410810.1">
    <property type="nucleotide sequence ID" value="NC_011751.1"/>
</dbReference>
<dbReference type="SMR" id="B7N7Q5"/>
<dbReference type="STRING" id="585056.ECUMN_0032"/>
<dbReference type="KEGG" id="eum:ECUMN_0032"/>
<dbReference type="PATRIC" id="fig|585056.7.peg.215"/>
<dbReference type="HOGENOM" id="CLU_047479_2_1_6"/>
<dbReference type="UniPathway" id="UPA00034">
    <property type="reaction ID" value="UER00018"/>
</dbReference>
<dbReference type="Proteomes" id="UP000007097">
    <property type="component" value="Chromosome"/>
</dbReference>
<dbReference type="GO" id="GO:0005829">
    <property type="term" value="C:cytosol"/>
    <property type="evidence" value="ECO:0007669"/>
    <property type="project" value="TreeGrafter"/>
</dbReference>
<dbReference type="GO" id="GO:0008839">
    <property type="term" value="F:4-hydroxy-tetrahydrodipicolinate reductase"/>
    <property type="evidence" value="ECO:0007669"/>
    <property type="project" value="UniProtKB-EC"/>
</dbReference>
<dbReference type="GO" id="GO:0051287">
    <property type="term" value="F:NAD binding"/>
    <property type="evidence" value="ECO:0007669"/>
    <property type="project" value="UniProtKB-UniRule"/>
</dbReference>
<dbReference type="GO" id="GO:0050661">
    <property type="term" value="F:NADP binding"/>
    <property type="evidence" value="ECO:0007669"/>
    <property type="project" value="UniProtKB-UniRule"/>
</dbReference>
<dbReference type="GO" id="GO:0016726">
    <property type="term" value="F:oxidoreductase activity, acting on CH or CH2 groups, NAD or NADP as acceptor"/>
    <property type="evidence" value="ECO:0007669"/>
    <property type="project" value="UniProtKB-UniRule"/>
</dbReference>
<dbReference type="GO" id="GO:0019877">
    <property type="term" value="P:diaminopimelate biosynthetic process"/>
    <property type="evidence" value="ECO:0007669"/>
    <property type="project" value="UniProtKB-UniRule"/>
</dbReference>
<dbReference type="GO" id="GO:0009089">
    <property type="term" value="P:lysine biosynthetic process via diaminopimelate"/>
    <property type="evidence" value="ECO:0007669"/>
    <property type="project" value="UniProtKB-UniRule"/>
</dbReference>
<dbReference type="CDD" id="cd02274">
    <property type="entry name" value="DHDPR_N"/>
    <property type="match status" value="1"/>
</dbReference>
<dbReference type="FunFam" id="3.30.360.10:FF:000004">
    <property type="entry name" value="4-hydroxy-tetrahydrodipicolinate reductase"/>
    <property type="match status" value="1"/>
</dbReference>
<dbReference type="FunFam" id="3.40.50.720:FF:000048">
    <property type="entry name" value="4-hydroxy-tetrahydrodipicolinate reductase"/>
    <property type="match status" value="1"/>
</dbReference>
<dbReference type="Gene3D" id="3.30.360.10">
    <property type="entry name" value="Dihydrodipicolinate Reductase, domain 2"/>
    <property type="match status" value="1"/>
</dbReference>
<dbReference type="Gene3D" id="3.40.50.720">
    <property type="entry name" value="NAD(P)-binding Rossmann-like Domain"/>
    <property type="match status" value="1"/>
</dbReference>
<dbReference type="HAMAP" id="MF_00102">
    <property type="entry name" value="DapB"/>
    <property type="match status" value="1"/>
</dbReference>
<dbReference type="InterPro" id="IPR022663">
    <property type="entry name" value="DapB_C"/>
</dbReference>
<dbReference type="InterPro" id="IPR000846">
    <property type="entry name" value="DapB_N"/>
</dbReference>
<dbReference type="InterPro" id="IPR022664">
    <property type="entry name" value="DapB_N_CS"/>
</dbReference>
<dbReference type="InterPro" id="IPR023940">
    <property type="entry name" value="DHDPR_bac"/>
</dbReference>
<dbReference type="InterPro" id="IPR036291">
    <property type="entry name" value="NAD(P)-bd_dom_sf"/>
</dbReference>
<dbReference type="NCBIfam" id="TIGR00036">
    <property type="entry name" value="dapB"/>
    <property type="match status" value="1"/>
</dbReference>
<dbReference type="PANTHER" id="PTHR20836:SF0">
    <property type="entry name" value="4-HYDROXY-TETRAHYDRODIPICOLINATE REDUCTASE 1, CHLOROPLASTIC-RELATED"/>
    <property type="match status" value="1"/>
</dbReference>
<dbReference type="PANTHER" id="PTHR20836">
    <property type="entry name" value="DIHYDRODIPICOLINATE REDUCTASE"/>
    <property type="match status" value="1"/>
</dbReference>
<dbReference type="Pfam" id="PF05173">
    <property type="entry name" value="DapB_C"/>
    <property type="match status" value="1"/>
</dbReference>
<dbReference type="Pfam" id="PF01113">
    <property type="entry name" value="DapB_N"/>
    <property type="match status" value="1"/>
</dbReference>
<dbReference type="PIRSF" id="PIRSF000161">
    <property type="entry name" value="DHPR"/>
    <property type="match status" value="1"/>
</dbReference>
<dbReference type="SUPFAM" id="SSF55347">
    <property type="entry name" value="Glyceraldehyde-3-phosphate dehydrogenase-like, C-terminal domain"/>
    <property type="match status" value="1"/>
</dbReference>
<dbReference type="SUPFAM" id="SSF51735">
    <property type="entry name" value="NAD(P)-binding Rossmann-fold domains"/>
    <property type="match status" value="1"/>
</dbReference>
<dbReference type="PROSITE" id="PS01298">
    <property type="entry name" value="DAPB"/>
    <property type="match status" value="1"/>
</dbReference>
<keyword id="KW-0028">Amino-acid biosynthesis</keyword>
<keyword id="KW-0963">Cytoplasm</keyword>
<keyword id="KW-0220">Diaminopimelate biosynthesis</keyword>
<keyword id="KW-0457">Lysine biosynthesis</keyword>
<keyword id="KW-0520">NAD</keyword>
<keyword id="KW-0521">NADP</keyword>
<keyword id="KW-0560">Oxidoreductase</keyword>
<comment type="function">
    <text evidence="1">Catalyzes the conversion of 4-hydroxy-tetrahydrodipicolinate (HTPA) to tetrahydrodipicolinate.</text>
</comment>
<comment type="catalytic activity">
    <reaction evidence="1">
        <text>(S)-2,3,4,5-tetrahydrodipicolinate + NAD(+) + H2O = (2S,4S)-4-hydroxy-2,3,4,5-tetrahydrodipicolinate + NADH + H(+)</text>
        <dbReference type="Rhea" id="RHEA:35323"/>
        <dbReference type="ChEBI" id="CHEBI:15377"/>
        <dbReference type="ChEBI" id="CHEBI:15378"/>
        <dbReference type="ChEBI" id="CHEBI:16845"/>
        <dbReference type="ChEBI" id="CHEBI:57540"/>
        <dbReference type="ChEBI" id="CHEBI:57945"/>
        <dbReference type="ChEBI" id="CHEBI:67139"/>
        <dbReference type="EC" id="1.17.1.8"/>
    </reaction>
</comment>
<comment type="catalytic activity">
    <reaction evidence="1">
        <text>(S)-2,3,4,5-tetrahydrodipicolinate + NADP(+) + H2O = (2S,4S)-4-hydroxy-2,3,4,5-tetrahydrodipicolinate + NADPH + H(+)</text>
        <dbReference type="Rhea" id="RHEA:35331"/>
        <dbReference type="ChEBI" id="CHEBI:15377"/>
        <dbReference type="ChEBI" id="CHEBI:15378"/>
        <dbReference type="ChEBI" id="CHEBI:16845"/>
        <dbReference type="ChEBI" id="CHEBI:57783"/>
        <dbReference type="ChEBI" id="CHEBI:58349"/>
        <dbReference type="ChEBI" id="CHEBI:67139"/>
        <dbReference type="EC" id="1.17.1.8"/>
    </reaction>
</comment>
<comment type="pathway">
    <text evidence="1">Amino-acid biosynthesis; L-lysine biosynthesis via DAP pathway; (S)-tetrahydrodipicolinate from L-aspartate: step 4/4.</text>
</comment>
<comment type="subunit">
    <text evidence="1">Homotetramer.</text>
</comment>
<comment type="subcellular location">
    <subcellularLocation>
        <location evidence="1">Cytoplasm</location>
    </subcellularLocation>
</comment>
<comment type="similarity">
    <text evidence="1">Belongs to the DapB family.</text>
</comment>
<comment type="caution">
    <text evidence="2">Was originally thought to be a dihydrodipicolinate reductase (DHDPR), catalyzing the conversion of dihydrodipicolinate to tetrahydrodipicolinate. However, it was shown in E.coli that the substrate of the enzymatic reaction is not dihydrodipicolinate (DHDP) but in fact (2S,4S)-4-hydroxy-2,3,4,5-tetrahydrodipicolinic acid (HTPA), the product released by the DapA-catalyzed reaction.</text>
</comment>
<reference key="1">
    <citation type="journal article" date="2009" name="PLoS Genet.">
        <title>Organised genome dynamics in the Escherichia coli species results in highly diverse adaptive paths.</title>
        <authorList>
            <person name="Touchon M."/>
            <person name="Hoede C."/>
            <person name="Tenaillon O."/>
            <person name="Barbe V."/>
            <person name="Baeriswyl S."/>
            <person name="Bidet P."/>
            <person name="Bingen E."/>
            <person name="Bonacorsi S."/>
            <person name="Bouchier C."/>
            <person name="Bouvet O."/>
            <person name="Calteau A."/>
            <person name="Chiapello H."/>
            <person name="Clermont O."/>
            <person name="Cruveiller S."/>
            <person name="Danchin A."/>
            <person name="Diard M."/>
            <person name="Dossat C."/>
            <person name="Karoui M.E."/>
            <person name="Frapy E."/>
            <person name="Garry L."/>
            <person name="Ghigo J.M."/>
            <person name="Gilles A.M."/>
            <person name="Johnson J."/>
            <person name="Le Bouguenec C."/>
            <person name="Lescat M."/>
            <person name="Mangenot S."/>
            <person name="Martinez-Jehanne V."/>
            <person name="Matic I."/>
            <person name="Nassif X."/>
            <person name="Oztas S."/>
            <person name="Petit M.A."/>
            <person name="Pichon C."/>
            <person name="Rouy Z."/>
            <person name="Ruf C.S."/>
            <person name="Schneider D."/>
            <person name="Tourret J."/>
            <person name="Vacherie B."/>
            <person name="Vallenet D."/>
            <person name="Medigue C."/>
            <person name="Rocha E.P.C."/>
            <person name="Denamur E."/>
        </authorList>
    </citation>
    <scope>NUCLEOTIDE SEQUENCE [LARGE SCALE GENOMIC DNA]</scope>
    <source>
        <strain>UMN026 / ExPEC</strain>
    </source>
</reference>
<gene>
    <name evidence="1" type="primary">dapB</name>
    <name type="ordered locus">ECUMN_0032</name>
</gene>
<proteinExistence type="inferred from homology"/>
<protein>
    <recommendedName>
        <fullName evidence="1">4-hydroxy-tetrahydrodipicolinate reductase</fullName>
        <shortName evidence="1">HTPA reductase</shortName>
        <ecNumber evidence="1">1.17.1.8</ecNumber>
    </recommendedName>
</protein>
<evidence type="ECO:0000255" key="1">
    <source>
        <dbReference type="HAMAP-Rule" id="MF_00102"/>
    </source>
</evidence>
<evidence type="ECO:0000305" key="2"/>
<organism>
    <name type="scientific">Escherichia coli O17:K52:H18 (strain UMN026 / ExPEC)</name>
    <dbReference type="NCBI Taxonomy" id="585056"/>
    <lineage>
        <taxon>Bacteria</taxon>
        <taxon>Pseudomonadati</taxon>
        <taxon>Pseudomonadota</taxon>
        <taxon>Gammaproteobacteria</taxon>
        <taxon>Enterobacterales</taxon>
        <taxon>Enterobacteriaceae</taxon>
        <taxon>Escherichia</taxon>
    </lineage>
</organism>